<protein>
    <recommendedName>
        <fullName>Nudix hydrolase 4</fullName>
        <shortName>AtNUDT4</shortName>
        <ecNumber>3.6.1.-</ecNumber>
    </recommendedName>
    <alternativeName>
        <fullName>ADP-ribose pyrophosphatase</fullName>
        <ecNumber>3.6.1.13</ecNumber>
    </alternativeName>
    <alternativeName>
        <fullName>NADH pyrophosphatase</fullName>
        <ecNumber>3.6.1.22</ecNumber>
    </alternativeName>
</protein>
<feature type="chain" id="PRO_0000057124" description="Nudix hydrolase 4">
    <location>
        <begin position="1"/>
        <end position="207"/>
    </location>
</feature>
<feature type="domain" description="Nudix hydrolase" evidence="2">
    <location>
        <begin position="58"/>
        <end position="194"/>
    </location>
</feature>
<feature type="short sequence motif" description="Nudix box">
    <location>
        <begin position="101"/>
        <end position="122"/>
    </location>
</feature>
<feature type="binding site" evidence="1">
    <location>
        <position position="116"/>
    </location>
    <ligand>
        <name>Mg(2+)</name>
        <dbReference type="ChEBI" id="CHEBI:18420"/>
    </ligand>
</feature>
<feature type="binding site" evidence="1">
    <location>
        <position position="120"/>
    </location>
    <ligand>
        <name>Mg(2+)</name>
        <dbReference type="ChEBI" id="CHEBI:18420"/>
    </ligand>
</feature>
<evidence type="ECO:0000250" key="1"/>
<evidence type="ECO:0000255" key="2">
    <source>
        <dbReference type="PROSITE-ProRule" id="PRU00794"/>
    </source>
</evidence>
<evidence type="ECO:0000269" key="3">
    <source>
    </source>
</evidence>
<evidence type="ECO:0000305" key="4"/>
<gene>
    <name type="primary">NUDT4</name>
    <name type="synonym">NUDX4</name>
    <name type="ordered locus">At1g18300</name>
    <name type="ORF">F15H18.18</name>
</gene>
<reference key="1">
    <citation type="journal article" date="2000" name="Nature">
        <title>Sequence and analysis of chromosome 1 of the plant Arabidopsis thaliana.</title>
        <authorList>
            <person name="Theologis A."/>
            <person name="Ecker J.R."/>
            <person name="Palm C.J."/>
            <person name="Federspiel N.A."/>
            <person name="Kaul S."/>
            <person name="White O."/>
            <person name="Alonso J."/>
            <person name="Altafi H."/>
            <person name="Araujo R."/>
            <person name="Bowman C.L."/>
            <person name="Brooks S.Y."/>
            <person name="Buehler E."/>
            <person name="Chan A."/>
            <person name="Chao Q."/>
            <person name="Chen H."/>
            <person name="Cheuk R.F."/>
            <person name="Chin C.W."/>
            <person name="Chung M.K."/>
            <person name="Conn L."/>
            <person name="Conway A.B."/>
            <person name="Conway A.R."/>
            <person name="Creasy T.H."/>
            <person name="Dewar K."/>
            <person name="Dunn P."/>
            <person name="Etgu P."/>
            <person name="Feldblyum T.V."/>
            <person name="Feng J.-D."/>
            <person name="Fong B."/>
            <person name="Fujii C.Y."/>
            <person name="Gill J.E."/>
            <person name="Goldsmith A.D."/>
            <person name="Haas B."/>
            <person name="Hansen N.F."/>
            <person name="Hughes B."/>
            <person name="Huizar L."/>
            <person name="Hunter J.L."/>
            <person name="Jenkins J."/>
            <person name="Johnson-Hopson C."/>
            <person name="Khan S."/>
            <person name="Khaykin E."/>
            <person name="Kim C.J."/>
            <person name="Koo H.L."/>
            <person name="Kremenetskaia I."/>
            <person name="Kurtz D.B."/>
            <person name="Kwan A."/>
            <person name="Lam B."/>
            <person name="Langin-Hooper S."/>
            <person name="Lee A."/>
            <person name="Lee J.M."/>
            <person name="Lenz C.A."/>
            <person name="Li J.H."/>
            <person name="Li Y.-P."/>
            <person name="Lin X."/>
            <person name="Liu S.X."/>
            <person name="Liu Z.A."/>
            <person name="Luros J.S."/>
            <person name="Maiti R."/>
            <person name="Marziali A."/>
            <person name="Militscher J."/>
            <person name="Miranda M."/>
            <person name="Nguyen M."/>
            <person name="Nierman W.C."/>
            <person name="Osborne B.I."/>
            <person name="Pai G."/>
            <person name="Peterson J."/>
            <person name="Pham P.K."/>
            <person name="Rizzo M."/>
            <person name="Rooney T."/>
            <person name="Rowley D."/>
            <person name="Sakano H."/>
            <person name="Salzberg S.L."/>
            <person name="Schwartz J.R."/>
            <person name="Shinn P."/>
            <person name="Southwick A.M."/>
            <person name="Sun H."/>
            <person name="Tallon L.J."/>
            <person name="Tambunga G."/>
            <person name="Toriumi M.J."/>
            <person name="Town C.D."/>
            <person name="Utterback T."/>
            <person name="Van Aken S."/>
            <person name="Vaysberg M."/>
            <person name="Vysotskaia V.S."/>
            <person name="Walker M."/>
            <person name="Wu D."/>
            <person name="Yu G."/>
            <person name="Fraser C.M."/>
            <person name="Venter J.C."/>
            <person name="Davis R.W."/>
        </authorList>
    </citation>
    <scope>NUCLEOTIDE SEQUENCE [LARGE SCALE GENOMIC DNA]</scope>
    <source>
        <strain>cv. Columbia</strain>
    </source>
</reference>
<reference key="2">
    <citation type="journal article" date="2017" name="Plant J.">
        <title>Araport11: a complete reannotation of the Arabidopsis thaliana reference genome.</title>
        <authorList>
            <person name="Cheng C.Y."/>
            <person name="Krishnakumar V."/>
            <person name="Chan A.P."/>
            <person name="Thibaud-Nissen F."/>
            <person name="Schobel S."/>
            <person name="Town C.D."/>
        </authorList>
    </citation>
    <scope>GENOME REANNOTATION</scope>
    <source>
        <strain>cv. Columbia</strain>
    </source>
</reference>
<reference key="3">
    <citation type="journal article" date="2003" name="Science">
        <title>Empirical analysis of transcriptional activity in the Arabidopsis genome.</title>
        <authorList>
            <person name="Yamada K."/>
            <person name="Lim J."/>
            <person name="Dale J.M."/>
            <person name="Chen H."/>
            <person name="Shinn P."/>
            <person name="Palm C.J."/>
            <person name="Southwick A.M."/>
            <person name="Wu H.C."/>
            <person name="Kim C.J."/>
            <person name="Nguyen M."/>
            <person name="Pham P.K."/>
            <person name="Cheuk R.F."/>
            <person name="Karlin-Newmann G."/>
            <person name="Liu S.X."/>
            <person name="Lam B."/>
            <person name="Sakano H."/>
            <person name="Wu T."/>
            <person name="Yu G."/>
            <person name="Miranda M."/>
            <person name="Quach H.L."/>
            <person name="Tripp M."/>
            <person name="Chang C.H."/>
            <person name="Lee J.M."/>
            <person name="Toriumi M.J."/>
            <person name="Chan M.M."/>
            <person name="Tang C.C."/>
            <person name="Onodera C.S."/>
            <person name="Deng J.M."/>
            <person name="Akiyama K."/>
            <person name="Ansari Y."/>
            <person name="Arakawa T."/>
            <person name="Banh J."/>
            <person name="Banno F."/>
            <person name="Bowser L."/>
            <person name="Brooks S.Y."/>
            <person name="Carninci P."/>
            <person name="Chao Q."/>
            <person name="Choy N."/>
            <person name="Enju A."/>
            <person name="Goldsmith A.D."/>
            <person name="Gurjal M."/>
            <person name="Hansen N.F."/>
            <person name="Hayashizaki Y."/>
            <person name="Johnson-Hopson C."/>
            <person name="Hsuan V.W."/>
            <person name="Iida K."/>
            <person name="Karnes M."/>
            <person name="Khan S."/>
            <person name="Koesema E."/>
            <person name="Ishida J."/>
            <person name="Jiang P.X."/>
            <person name="Jones T."/>
            <person name="Kawai J."/>
            <person name="Kamiya A."/>
            <person name="Meyers C."/>
            <person name="Nakajima M."/>
            <person name="Narusaka M."/>
            <person name="Seki M."/>
            <person name="Sakurai T."/>
            <person name="Satou M."/>
            <person name="Tamse R."/>
            <person name="Vaysberg M."/>
            <person name="Wallender E.K."/>
            <person name="Wong C."/>
            <person name="Yamamura Y."/>
            <person name="Yuan S."/>
            <person name="Shinozaki K."/>
            <person name="Davis R.W."/>
            <person name="Theologis A."/>
            <person name="Ecker J.R."/>
        </authorList>
    </citation>
    <scope>NUCLEOTIDE SEQUENCE [LARGE SCALE MRNA]</scope>
    <source>
        <strain>cv. Columbia</strain>
    </source>
</reference>
<reference key="4">
    <citation type="submission" date="2006-07" db="EMBL/GenBank/DDBJ databases">
        <title>Large-scale analysis of RIKEN Arabidopsis full-length (RAFL) cDNAs.</title>
        <authorList>
            <person name="Totoki Y."/>
            <person name="Seki M."/>
            <person name="Ishida J."/>
            <person name="Nakajima M."/>
            <person name="Enju A."/>
            <person name="Kamiya A."/>
            <person name="Narusaka M."/>
            <person name="Shin-i T."/>
            <person name="Nakagawa M."/>
            <person name="Sakamoto N."/>
            <person name="Oishi K."/>
            <person name="Kohara Y."/>
            <person name="Kobayashi M."/>
            <person name="Toyoda A."/>
            <person name="Sakaki Y."/>
            <person name="Sakurai T."/>
            <person name="Iida K."/>
            <person name="Akiyama K."/>
            <person name="Satou M."/>
            <person name="Toyoda T."/>
            <person name="Konagaya A."/>
            <person name="Carninci P."/>
            <person name="Kawai J."/>
            <person name="Hayashizaki Y."/>
            <person name="Shinozaki K."/>
        </authorList>
    </citation>
    <scope>NUCLEOTIDE SEQUENCE [LARGE SCALE MRNA]</scope>
    <source>
        <strain>cv. Columbia</strain>
    </source>
</reference>
<reference key="5">
    <citation type="journal article" date="2005" name="J. Biol. Chem.">
        <title>Comprehensive analysis of cytosolic nudix hydrolases in Arabidopsis thaliana.</title>
        <authorList>
            <person name="Ogawa T."/>
            <person name="Ueda Y."/>
            <person name="Yoshimura K."/>
            <person name="Shigeoka S."/>
        </authorList>
    </citation>
    <scope>FUNCTION IN VITRO</scope>
    <scope>TISSUE SPECIFICITY</scope>
</reference>
<accession>Q9LE73</accession>
<accession>Q0WU23</accession>
<keyword id="KW-0378">Hydrolase</keyword>
<keyword id="KW-0460">Magnesium</keyword>
<keyword id="KW-0464">Manganese</keyword>
<keyword id="KW-0479">Metal-binding</keyword>
<keyword id="KW-0520">NAD</keyword>
<keyword id="KW-1185">Reference proteome</keyword>
<proteinExistence type="evidence at protein level"/>
<sequence length="207" mass="23701">MTGFSVSLFVSNLSNVASYLSPIFENIPSTKVVPAQIEKVVSLVSRTGRDLQRYDHAGYRQVVGCVPYRYKKQEVNGVETQVIQVLLVSAQKGKGMLFPKGGWETDESMEEAALRETIEEAGVTGELEEKLGKWQYKSKRHSIIHDGYMFALLVSQEFERWPEAEMRQRRWVSLDEAREVCQNWWMREALEAFINLKCLADDDESGN</sequence>
<organism>
    <name type="scientific">Arabidopsis thaliana</name>
    <name type="common">Mouse-ear cress</name>
    <dbReference type="NCBI Taxonomy" id="3702"/>
    <lineage>
        <taxon>Eukaryota</taxon>
        <taxon>Viridiplantae</taxon>
        <taxon>Streptophyta</taxon>
        <taxon>Embryophyta</taxon>
        <taxon>Tracheophyta</taxon>
        <taxon>Spermatophyta</taxon>
        <taxon>Magnoliopsida</taxon>
        <taxon>eudicotyledons</taxon>
        <taxon>Gunneridae</taxon>
        <taxon>Pentapetalae</taxon>
        <taxon>rosids</taxon>
        <taxon>malvids</taxon>
        <taxon>Brassicales</taxon>
        <taxon>Brassicaceae</taxon>
        <taxon>Camelineae</taxon>
        <taxon>Arabidopsis</taxon>
    </lineage>
</organism>
<name>NUDT4_ARATH</name>
<comment type="function">
    <text evidence="3">Probably mediates the hydrolysis of some nucleoside diphosphate derivatives. In vitro, it can use both NADH and ADP-ribose as substrates; however the relevance of such substrates in vivo is unclear.</text>
</comment>
<comment type="catalytic activity">
    <reaction>
        <text>ADP-D-ribose + H2O = D-ribose 5-phosphate + AMP + 2 H(+)</text>
        <dbReference type="Rhea" id="RHEA:10412"/>
        <dbReference type="ChEBI" id="CHEBI:15377"/>
        <dbReference type="ChEBI" id="CHEBI:15378"/>
        <dbReference type="ChEBI" id="CHEBI:57967"/>
        <dbReference type="ChEBI" id="CHEBI:78346"/>
        <dbReference type="ChEBI" id="CHEBI:456215"/>
        <dbReference type="EC" id="3.6.1.13"/>
    </reaction>
</comment>
<comment type="catalytic activity">
    <reaction>
        <text>NAD(+) + H2O = beta-nicotinamide D-ribonucleotide + AMP + 2 H(+)</text>
        <dbReference type="Rhea" id="RHEA:11800"/>
        <dbReference type="ChEBI" id="CHEBI:14649"/>
        <dbReference type="ChEBI" id="CHEBI:15377"/>
        <dbReference type="ChEBI" id="CHEBI:15378"/>
        <dbReference type="ChEBI" id="CHEBI:57540"/>
        <dbReference type="ChEBI" id="CHEBI:456215"/>
        <dbReference type="EC" id="3.6.1.22"/>
    </reaction>
</comment>
<comment type="catalytic activity">
    <reaction>
        <text>NADH + H2O = reduced beta-nicotinamide D-ribonucleotide + AMP + 2 H(+)</text>
        <dbReference type="Rhea" id="RHEA:48868"/>
        <dbReference type="ChEBI" id="CHEBI:15377"/>
        <dbReference type="ChEBI" id="CHEBI:15378"/>
        <dbReference type="ChEBI" id="CHEBI:57945"/>
        <dbReference type="ChEBI" id="CHEBI:90832"/>
        <dbReference type="ChEBI" id="CHEBI:456215"/>
        <dbReference type="EC" id="3.6.1.22"/>
    </reaction>
</comment>
<comment type="cofactor">
    <cofactor evidence="1">
        <name>Mg(2+)</name>
        <dbReference type="ChEBI" id="CHEBI:18420"/>
    </cofactor>
    <cofactor evidence="1">
        <name>Mn(2+)</name>
        <dbReference type="ChEBI" id="CHEBI:29035"/>
    </cofactor>
</comment>
<comment type="tissue specificity">
    <text evidence="3">Expressed in roots, stems and leaves.</text>
</comment>
<comment type="similarity">
    <text evidence="4">Belongs to the Nudix hydrolase family.</text>
</comment>
<dbReference type="EC" id="3.6.1.-"/>
<dbReference type="EC" id="3.6.1.13"/>
<dbReference type="EC" id="3.6.1.22"/>
<dbReference type="EMBL" id="AC013354">
    <property type="protein sequence ID" value="AAF25994.1"/>
    <property type="molecule type" value="Genomic_DNA"/>
</dbReference>
<dbReference type="EMBL" id="AC069551">
    <property type="protein sequence ID" value="AAF78378.1"/>
    <property type="molecule type" value="Genomic_DNA"/>
</dbReference>
<dbReference type="EMBL" id="CP002684">
    <property type="protein sequence ID" value="AEE29699.1"/>
    <property type="molecule type" value="Genomic_DNA"/>
</dbReference>
<dbReference type="EMBL" id="BT003060">
    <property type="protein sequence ID" value="AAO23625.1"/>
    <property type="molecule type" value="mRNA"/>
</dbReference>
<dbReference type="EMBL" id="AK227367">
    <property type="protein sequence ID" value="BAE99375.1"/>
    <property type="molecule type" value="mRNA"/>
</dbReference>
<dbReference type="RefSeq" id="NP_173266.1">
    <property type="nucleotide sequence ID" value="NM_101688.3"/>
</dbReference>
<dbReference type="SMR" id="Q9LE73"/>
<dbReference type="FunCoup" id="Q9LE73">
    <property type="interactions" value="1404"/>
</dbReference>
<dbReference type="STRING" id="3702.Q9LE73"/>
<dbReference type="PaxDb" id="3702-AT1G18300.1"/>
<dbReference type="EnsemblPlants" id="AT1G18300.1">
    <property type="protein sequence ID" value="AT1G18300.1"/>
    <property type="gene ID" value="AT1G18300"/>
</dbReference>
<dbReference type="GeneID" id="838410"/>
<dbReference type="Gramene" id="AT1G18300.1">
    <property type="protein sequence ID" value="AT1G18300.1"/>
    <property type="gene ID" value="AT1G18300"/>
</dbReference>
<dbReference type="KEGG" id="ath:AT1G18300"/>
<dbReference type="Araport" id="AT1G18300"/>
<dbReference type="TAIR" id="AT1G18300">
    <property type="gene designation" value="NUDT4"/>
</dbReference>
<dbReference type="eggNOG" id="KOG2839">
    <property type="taxonomic scope" value="Eukaryota"/>
</dbReference>
<dbReference type="HOGENOM" id="CLU_037162_5_2_1"/>
<dbReference type="InParanoid" id="Q9LE73"/>
<dbReference type="OMA" id="AFINLKC"/>
<dbReference type="OrthoDB" id="2011998at2759"/>
<dbReference type="PhylomeDB" id="Q9LE73"/>
<dbReference type="BioCyc" id="ARA:AT1G18300-MONOMER"/>
<dbReference type="PRO" id="PR:Q9LE73"/>
<dbReference type="Proteomes" id="UP000006548">
    <property type="component" value="Chromosome 1"/>
</dbReference>
<dbReference type="ExpressionAtlas" id="Q9LE73">
    <property type="expression patterns" value="baseline and differential"/>
</dbReference>
<dbReference type="GO" id="GO:0005829">
    <property type="term" value="C:cytosol"/>
    <property type="evidence" value="ECO:0000255"/>
    <property type="project" value="TAIR"/>
</dbReference>
<dbReference type="GO" id="GO:0047631">
    <property type="term" value="F:ADP-ribose diphosphatase activity"/>
    <property type="evidence" value="ECO:0007669"/>
    <property type="project" value="UniProtKB-EC"/>
</dbReference>
<dbReference type="GO" id="GO:0046872">
    <property type="term" value="F:metal ion binding"/>
    <property type="evidence" value="ECO:0007669"/>
    <property type="project" value="UniProtKB-KW"/>
</dbReference>
<dbReference type="GO" id="GO:0000210">
    <property type="term" value="F:NAD+ diphosphatase activity"/>
    <property type="evidence" value="ECO:0007669"/>
    <property type="project" value="RHEA"/>
</dbReference>
<dbReference type="GO" id="GO:0035529">
    <property type="term" value="F:NADH pyrophosphatase activity"/>
    <property type="evidence" value="ECO:0007669"/>
    <property type="project" value="RHEA"/>
</dbReference>
<dbReference type="GO" id="GO:0071456">
    <property type="term" value="P:cellular response to hypoxia"/>
    <property type="evidence" value="ECO:0007007"/>
    <property type="project" value="TAIR"/>
</dbReference>
<dbReference type="CDD" id="cd04666">
    <property type="entry name" value="NUDIX_DIPP2_like_Nudt4"/>
    <property type="match status" value="1"/>
</dbReference>
<dbReference type="FunFam" id="3.90.79.10:FF:000022">
    <property type="entry name" value="Nudix hydrolase 17, mitochondrial"/>
    <property type="match status" value="1"/>
</dbReference>
<dbReference type="Gene3D" id="3.90.79.10">
    <property type="entry name" value="Nucleoside Triphosphate Pyrophosphohydrolase"/>
    <property type="match status" value="1"/>
</dbReference>
<dbReference type="InterPro" id="IPR047198">
    <property type="entry name" value="DDP-like_NUDIX"/>
</dbReference>
<dbReference type="InterPro" id="IPR015797">
    <property type="entry name" value="NUDIX_hydrolase-like_dom_sf"/>
</dbReference>
<dbReference type="InterPro" id="IPR020084">
    <property type="entry name" value="NUDIX_hydrolase_CS"/>
</dbReference>
<dbReference type="InterPro" id="IPR000086">
    <property type="entry name" value="NUDIX_hydrolase_dom"/>
</dbReference>
<dbReference type="PANTHER" id="PTHR12629">
    <property type="entry name" value="DIPHOSPHOINOSITOL POLYPHOSPHATE PHOSPHOHYDROLASE"/>
    <property type="match status" value="1"/>
</dbReference>
<dbReference type="PANTHER" id="PTHR12629:SF15">
    <property type="entry name" value="NUDIX HYDROLASE 4"/>
    <property type="match status" value="1"/>
</dbReference>
<dbReference type="Pfam" id="PF00293">
    <property type="entry name" value="NUDIX"/>
    <property type="match status" value="1"/>
</dbReference>
<dbReference type="SUPFAM" id="SSF55811">
    <property type="entry name" value="Nudix"/>
    <property type="match status" value="1"/>
</dbReference>
<dbReference type="PROSITE" id="PS51462">
    <property type="entry name" value="NUDIX"/>
    <property type="match status" value="1"/>
</dbReference>
<dbReference type="PROSITE" id="PS00893">
    <property type="entry name" value="NUDIX_BOX"/>
    <property type="match status" value="1"/>
</dbReference>